<reference key="1">
    <citation type="journal article" date="2001" name="Proc. Natl. Acad. Sci. U.S.A.">
        <title>Nucleotide sequence and predicted functions of the entire Sinorhizobium meliloti pSymA megaplasmid.</title>
        <authorList>
            <person name="Barnett M.J."/>
            <person name="Fisher R.F."/>
            <person name="Jones T."/>
            <person name="Komp C."/>
            <person name="Abola A.P."/>
            <person name="Barloy-Hubler F."/>
            <person name="Bowser L."/>
            <person name="Capela D."/>
            <person name="Galibert F."/>
            <person name="Gouzy J."/>
            <person name="Gurjal M."/>
            <person name="Hong A."/>
            <person name="Huizar L."/>
            <person name="Hyman R.W."/>
            <person name="Kahn D."/>
            <person name="Kahn M.L."/>
            <person name="Kalman S."/>
            <person name="Keating D.H."/>
            <person name="Palm C."/>
            <person name="Peck M.C."/>
            <person name="Surzycki R."/>
            <person name="Wells D.H."/>
            <person name="Yeh K.-C."/>
            <person name="Davis R.W."/>
            <person name="Federspiel N.A."/>
            <person name="Long S.R."/>
        </authorList>
    </citation>
    <scope>NUCLEOTIDE SEQUENCE [LARGE SCALE GENOMIC DNA]</scope>
    <source>
        <strain>1021</strain>
    </source>
</reference>
<reference key="2">
    <citation type="journal article" date="2001" name="Science">
        <title>The composite genome of the legume symbiont Sinorhizobium meliloti.</title>
        <authorList>
            <person name="Galibert F."/>
            <person name="Finan T.M."/>
            <person name="Long S.R."/>
            <person name="Puehler A."/>
            <person name="Abola P."/>
            <person name="Ampe F."/>
            <person name="Barloy-Hubler F."/>
            <person name="Barnett M.J."/>
            <person name="Becker A."/>
            <person name="Boistard P."/>
            <person name="Bothe G."/>
            <person name="Boutry M."/>
            <person name="Bowser L."/>
            <person name="Buhrmester J."/>
            <person name="Cadieu E."/>
            <person name="Capela D."/>
            <person name="Chain P."/>
            <person name="Cowie A."/>
            <person name="Davis R.W."/>
            <person name="Dreano S."/>
            <person name="Federspiel N.A."/>
            <person name="Fisher R.F."/>
            <person name="Gloux S."/>
            <person name="Godrie T."/>
            <person name="Goffeau A."/>
            <person name="Golding B."/>
            <person name="Gouzy J."/>
            <person name="Gurjal M."/>
            <person name="Hernandez-Lucas I."/>
            <person name="Hong A."/>
            <person name="Huizar L."/>
            <person name="Hyman R.W."/>
            <person name="Jones T."/>
            <person name="Kahn D."/>
            <person name="Kahn M.L."/>
            <person name="Kalman S."/>
            <person name="Keating D.H."/>
            <person name="Kiss E."/>
            <person name="Komp C."/>
            <person name="Lelaure V."/>
            <person name="Masuy D."/>
            <person name="Palm C."/>
            <person name="Peck M.C."/>
            <person name="Pohl T.M."/>
            <person name="Portetelle D."/>
            <person name="Purnelle B."/>
            <person name="Ramsperger U."/>
            <person name="Surzycki R."/>
            <person name="Thebault P."/>
            <person name="Vandenbol M."/>
            <person name="Vorhoelter F.J."/>
            <person name="Weidner S."/>
            <person name="Wells D.H."/>
            <person name="Wong K."/>
            <person name="Yeh K.-C."/>
            <person name="Batut J."/>
        </authorList>
    </citation>
    <scope>NUCLEOTIDE SEQUENCE [LARGE SCALE GENOMIC DNA]</scope>
    <source>
        <strain>1021</strain>
    </source>
</reference>
<accession>Q930J0</accession>
<gene>
    <name type="primary">hisC3</name>
    <name type="ordered locus">RA0206</name>
    <name type="ORF">SMa0387</name>
</gene>
<sequence length="370" mass="40712">MAIPSRPIREEIRSIAPYNAGLTLEEVRAKYHVDEVAKLSSNENPLGPSPALRRLFPDIGELARLYPDPQGRALCARLAASFDVENNQVILGNGSEDLIAVICRSVVRAGDTVVTLYPSFPLHEDYTTLMGGKVDRVTVTPDLSVDMDALLAAIARKPRMLMFSNPMNPVGSWLTPLQLAKVVAALDPETLIVVDEAYAEYAAGDDYPSAAEVLKVTGLNWVVLRTFSKAYGLAGLRIGYGIVSDGSLCDFFNRARTPFNTNAIAQVSALAAFDDTYHLNRSVELALVERERMKKELATMGYRIAPSKCNFLFFDARTEATPVAEALLRRGVIVKPWKQPRFETYIRVSIGSPVENDHFIHALKEVEAVG</sequence>
<keyword id="KW-0028">Amino-acid biosynthesis</keyword>
<keyword id="KW-0032">Aminotransferase</keyword>
<keyword id="KW-0368">Histidine biosynthesis</keyword>
<keyword id="KW-0614">Plasmid</keyword>
<keyword id="KW-0663">Pyridoxal phosphate</keyword>
<keyword id="KW-1185">Reference proteome</keyword>
<keyword id="KW-0808">Transferase</keyword>
<geneLocation type="plasmid">
    <name>pSymA</name>
    <name>megaplasmid 1</name>
</geneLocation>
<feature type="chain" id="PRO_0000153437" description="Histidinol-phosphate aminotransferase 3">
    <location>
        <begin position="1"/>
        <end position="370"/>
    </location>
</feature>
<feature type="modified residue" description="N6-(pyridoxal phosphate)lysine" evidence="1">
    <location>
        <position position="229"/>
    </location>
</feature>
<organism>
    <name type="scientific">Rhizobium meliloti (strain 1021)</name>
    <name type="common">Ensifer meliloti</name>
    <name type="synonym">Sinorhizobium meliloti</name>
    <dbReference type="NCBI Taxonomy" id="266834"/>
    <lineage>
        <taxon>Bacteria</taxon>
        <taxon>Pseudomonadati</taxon>
        <taxon>Pseudomonadota</taxon>
        <taxon>Alphaproteobacteria</taxon>
        <taxon>Hyphomicrobiales</taxon>
        <taxon>Rhizobiaceae</taxon>
        <taxon>Sinorhizobium/Ensifer group</taxon>
        <taxon>Sinorhizobium</taxon>
    </lineage>
</organism>
<protein>
    <recommendedName>
        <fullName>Histidinol-phosphate aminotransferase 3</fullName>
        <ecNumber>2.6.1.9</ecNumber>
    </recommendedName>
    <alternativeName>
        <fullName>Imidazole acetol-phosphate transaminase 3</fullName>
    </alternativeName>
</protein>
<comment type="catalytic activity">
    <reaction>
        <text>L-histidinol phosphate + 2-oxoglutarate = 3-(imidazol-4-yl)-2-oxopropyl phosphate + L-glutamate</text>
        <dbReference type="Rhea" id="RHEA:23744"/>
        <dbReference type="ChEBI" id="CHEBI:16810"/>
        <dbReference type="ChEBI" id="CHEBI:29985"/>
        <dbReference type="ChEBI" id="CHEBI:57766"/>
        <dbReference type="ChEBI" id="CHEBI:57980"/>
        <dbReference type="EC" id="2.6.1.9"/>
    </reaction>
</comment>
<comment type="cofactor">
    <cofactor evidence="1">
        <name>pyridoxal 5'-phosphate</name>
        <dbReference type="ChEBI" id="CHEBI:597326"/>
    </cofactor>
</comment>
<comment type="pathway">
    <text>Amino-acid biosynthesis; L-histidine biosynthesis; L-histidine from 5-phospho-alpha-D-ribose 1-diphosphate: step 7/9.</text>
</comment>
<comment type="subunit">
    <text evidence="1">Homodimer.</text>
</comment>
<comment type="similarity">
    <text evidence="2">Belongs to the class-II pyridoxal-phosphate-dependent aminotransferase family. Histidinol-phosphate aminotransferase subfamily.</text>
</comment>
<name>HIS83_RHIME</name>
<evidence type="ECO:0000250" key="1"/>
<evidence type="ECO:0000305" key="2"/>
<proteinExistence type="inferred from homology"/>
<dbReference type="EC" id="2.6.1.9"/>
<dbReference type="EMBL" id="AE006469">
    <property type="protein sequence ID" value="AAK64864.1"/>
    <property type="molecule type" value="Genomic_DNA"/>
</dbReference>
<dbReference type="PIR" id="F95287">
    <property type="entry name" value="F95287"/>
</dbReference>
<dbReference type="RefSeq" id="NP_435452.1">
    <property type="nucleotide sequence ID" value="NC_003037.1"/>
</dbReference>
<dbReference type="RefSeq" id="WP_010967205.1">
    <property type="nucleotide sequence ID" value="NC_003037.1"/>
</dbReference>
<dbReference type="SMR" id="Q930J0"/>
<dbReference type="EnsemblBacteria" id="AAK64864">
    <property type="protein sequence ID" value="AAK64864"/>
    <property type="gene ID" value="SMa0387"/>
</dbReference>
<dbReference type="KEGG" id="sme:SMa0387"/>
<dbReference type="PATRIC" id="fig|266834.11.peg.214"/>
<dbReference type="HOGENOM" id="CLU_017584_3_3_5"/>
<dbReference type="OrthoDB" id="9809616at2"/>
<dbReference type="UniPathway" id="UPA00031">
    <property type="reaction ID" value="UER00012"/>
</dbReference>
<dbReference type="Proteomes" id="UP000001976">
    <property type="component" value="Plasmid pSymA"/>
</dbReference>
<dbReference type="GO" id="GO:0004400">
    <property type="term" value="F:histidinol-phosphate transaminase activity"/>
    <property type="evidence" value="ECO:0007669"/>
    <property type="project" value="UniProtKB-UniRule"/>
</dbReference>
<dbReference type="GO" id="GO:0030170">
    <property type="term" value="F:pyridoxal phosphate binding"/>
    <property type="evidence" value="ECO:0007669"/>
    <property type="project" value="InterPro"/>
</dbReference>
<dbReference type="GO" id="GO:0000105">
    <property type="term" value="P:L-histidine biosynthetic process"/>
    <property type="evidence" value="ECO:0007669"/>
    <property type="project" value="UniProtKB-UniRule"/>
</dbReference>
<dbReference type="CDD" id="cd00609">
    <property type="entry name" value="AAT_like"/>
    <property type="match status" value="1"/>
</dbReference>
<dbReference type="Gene3D" id="3.90.1150.10">
    <property type="entry name" value="Aspartate Aminotransferase, domain 1"/>
    <property type="match status" value="1"/>
</dbReference>
<dbReference type="Gene3D" id="3.40.640.10">
    <property type="entry name" value="Type I PLP-dependent aspartate aminotransferase-like (Major domain)"/>
    <property type="match status" value="1"/>
</dbReference>
<dbReference type="HAMAP" id="MF_01023">
    <property type="entry name" value="HisC_aminotrans_2"/>
    <property type="match status" value="1"/>
</dbReference>
<dbReference type="InterPro" id="IPR001917">
    <property type="entry name" value="Aminotrans_II_pyridoxalP_BS"/>
</dbReference>
<dbReference type="InterPro" id="IPR004839">
    <property type="entry name" value="Aminotransferase_I/II_large"/>
</dbReference>
<dbReference type="InterPro" id="IPR005861">
    <property type="entry name" value="HisP_aminotrans"/>
</dbReference>
<dbReference type="InterPro" id="IPR050106">
    <property type="entry name" value="HistidinolP_aminotransfase"/>
</dbReference>
<dbReference type="InterPro" id="IPR015424">
    <property type="entry name" value="PyrdxlP-dep_Trfase"/>
</dbReference>
<dbReference type="InterPro" id="IPR015421">
    <property type="entry name" value="PyrdxlP-dep_Trfase_major"/>
</dbReference>
<dbReference type="InterPro" id="IPR015422">
    <property type="entry name" value="PyrdxlP-dep_Trfase_small"/>
</dbReference>
<dbReference type="NCBIfam" id="TIGR01141">
    <property type="entry name" value="hisC"/>
    <property type="match status" value="1"/>
</dbReference>
<dbReference type="NCBIfam" id="NF003496">
    <property type="entry name" value="PRK05166.1"/>
    <property type="match status" value="1"/>
</dbReference>
<dbReference type="PANTHER" id="PTHR43643:SF6">
    <property type="entry name" value="HISTIDINOL-PHOSPHATE AMINOTRANSFERASE"/>
    <property type="match status" value="1"/>
</dbReference>
<dbReference type="PANTHER" id="PTHR43643">
    <property type="entry name" value="HISTIDINOL-PHOSPHATE AMINOTRANSFERASE 2"/>
    <property type="match status" value="1"/>
</dbReference>
<dbReference type="Pfam" id="PF00155">
    <property type="entry name" value="Aminotran_1_2"/>
    <property type="match status" value="1"/>
</dbReference>
<dbReference type="SUPFAM" id="SSF53383">
    <property type="entry name" value="PLP-dependent transferases"/>
    <property type="match status" value="1"/>
</dbReference>
<dbReference type="PROSITE" id="PS00599">
    <property type="entry name" value="AA_TRANSFER_CLASS_2"/>
    <property type="match status" value="1"/>
</dbReference>